<reference key="1">
    <citation type="journal article" date="2016" name="Genome Biol. Evol.">
        <title>Comparative 'omics' of the Fusarium fujikuroi species complex highlights differences in genetic potential and metabolite synthesis.</title>
        <authorList>
            <person name="Niehaus E.-M."/>
            <person name="Muensterkoetter M."/>
            <person name="Proctor R.H."/>
            <person name="Brown D.W."/>
            <person name="Sharon A."/>
            <person name="Idan Y."/>
            <person name="Oren-Young L."/>
            <person name="Sieber C.M."/>
            <person name="Novak O."/>
            <person name="Pencik A."/>
            <person name="Tarkowska D."/>
            <person name="Hromadova K."/>
            <person name="Freeman S."/>
            <person name="Maymon M."/>
            <person name="Elazar M."/>
            <person name="Youssef S.A."/>
            <person name="El-Shabrawy E.S.M."/>
            <person name="Shalaby A.B.A."/>
            <person name="Houterman P."/>
            <person name="Brock N.L."/>
            <person name="Burkhardt I."/>
            <person name="Tsavkelova E.A."/>
            <person name="Dickschat J.S."/>
            <person name="Galuszka P."/>
            <person name="Gueldener U."/>
            <person name="Tudzynski B."/>
        </authorList>
    </citation>
    <scope>NUCLEOTIDE SEQUENCE [LARGE SCALE GENOMIC DNA]</scope>
    <source>
        <strain>ET1</strain>
    </source>
</reference>
<reference key="2">
    <citation type="journal article" date="2018" name="Molecules">
        <title>Fusaproliferin, a fungal mycotoxin, shows cytotoxicity against pancreatic cancer cell lines.</title>
        <authorList>
            <person name="Hoque N."/>
            <person name="Hasan C.M."/>
            <person name="Rana M.S."/>
            <person name="Varsha A."/>
            <person name="Sohrab M.H."/>
            <person name="Rahman K.M."/>
        </authorList>
    </citation>
    <scope>BIOTECHNOLOGY</scope>
</reference>
<reference key="3">
    <citation type="journal article" date="2021" name="Toxins">
        <title>Identification and functional characterization of the gene cluster responsible for fusaproliferin biosynthesis in Fusarium proliferatum.</title>
        <authorList>
            <person name="Ceranic A."/>
            <person name="Svoboda T."/>
            <person name="Berthiller F."/>
            <person name="Sulyok M."/>
            <person name="Samson J.M."/>
            <person name="Gueldener U."/>
            <person name="Schuhmacher R."/>
            <person name="Adam G."/>
        </authorList>
    </citation>
    <scope>FUNCTION</scope>
    <scope>DISRUPTION PHENOTYPE</scope>
    <scope>CATALYTIC ACTIVITY</scope>
    <scope>PATHWAY</scope>
</reference>
<reference key="4">
    <citation type="journal article" date="2022" name="Front. Pharmacol.">
        <title>Investigation of the anti-inflammatory activity of fusaproliferin analogues guided by transcriptome analysis.</title>
        <authorList>
            <person name="Kuang Q.X."/>
            <person name="Lei L.R."/>
            <person name="Li Q.Z."/>
            <person name="Peng W."/>
            <person name="Wang Y.M."/>
            <person name="Dai Y.F."/>
            <person name="Wang D."/>
            <person name="Gu Y.C."/>
            <person name="Deng Y."/>
            <person name="Guo D.L."/>
        </authorList>
    </citation>
    <scope>BIOTECHNOLOGY</scope>
</reference>
<protein>
    <recommendedName>
        <fullName evidence="9">Bifunctional terpene synthase FUP1</fullName>
    </recommendedName>
    <alternativeName>
        <fullName evidence="9">Fusaproliferin biosynthesis cluster protein 1</fullName>
    </alternativeName>
    <domain>
        <recommendedName>
            <fullName evidence="9">Terpene cyclase</fullName>
            <ecNumber evidence="7">4.2.3.-</ecNumber>
        </recommendedName>
    </domain>
    <domain>
        <recommendedName>
            <fullName evidence="9">Geranylgeranyl diphosphate synthase</fullName>
            <shortName evidence="9">GGDP synthase</shortName>
            <shortName evidence="9">GGS</shortName>
            <ecNumber evidence="7">2.5.1.29</ecNumber>
        </recommendedName>
    </domain>
</protein>
<accession>A0A1L7VFX3</accession>
<comment type="function">
    <text evidence="7">Bifunctional terpene synthase; part of the gene cluster that mediates the biosynthesis of the mycotoxin fusaproliferin (FUP) that belongs to the class of bicyclic sesterterpenoids (PubMed:34357940). The FUP biosynthetic pathway starts with the enzyme encoded by FUP1 that combines a C-terminal prenyltransferase domain responsible for the synthesis of geranylgeranyl diphosphate with the N-terminal terpene cyclase domain, to yield preterpestacin I (PubMed:34357940). Preterpestacin I is then decorated by oxygenation steps that are catalyzed by two cytochrome P450 monooxygenases. First, FUP2 introduces a hydroxyl group at the C-24 position resulting in the formation of preterpestacin IIa, which can be further oxidized. The second P450 monooxygenase catalyzes the hydroxylation at C-16 and C-17 of preterpestacin IIa, producing preterpestacin III. Subsequently, the FAD-dependent oxidoreductase FUP4 catalyzes the oxidation of the hydroxy group at the C-16 position to a keto group, leading to the formation of (-)-terpestacin, which is the immediate precursor of FUP. The final step in the proposed biosynthetic pathway is the addition of an acetyl group at the C-24 position of terpestacin, which is catalyzed by the acetyltransferase FUP5 (PubMed:34357940).</text>
</comment>
<comment type="catalytic activity">
    <reaction evidence="7">
        <text>isopentenyl diphosphate + (2E,6E)-farnesyl diphosphate = (2E,6E,10E)-geranylgeranyl diphosphate + diphosphate</text>
        <dbReference type="Rhea" id="RHEA:17653"/>
        <dbReference type="ChEBI" id="CHEBI:33019"/>
        <dbReference type="ChEBI" id="CHEBI:58756"/>
        <dbReference type="ChEBI" id="CHEBI:128769"/>
        <dbReference type="ChEBI" id="CHEBI:175763"/>
        <dbReference type="EC" id="2.5.1.29"/>
    </reaction>
    <physiologicalReaction direction="left-to-right" evidence="7">
        <dbReference type="Rhea" id="RHEA:17654"/>
    </physiologicalReaction>
</comment>
<comment type="cofactor">
    <cofactor evidence="3">
        <name>Mg(2+)</name>
        <dbReference type="ChEBI" id="CHEBI:18420"/>
    </cofactor>
</comment>
<comment type="pathway">
    <text evidence="7">Secondary metabolite biosynthesis; terpenoid biosynthesis.</text>
</comment>
<comment type="subunit">
    <text evidence="1">Hexamer.</text>
</comment>
<comment type="domain">
    <text evidence="2">The conserved DDXXD motifs as well as the NSE/DTE motif are important for the catalytic activity, presumably through binding to Mg(2+).</text>
</comment>
<comment type="disruption phenotype">
    <text evidence="7">Leads to complete loss of fusaproliferin production.</text>
</comment>
<comment type="biotechnology">
    <text evidence="6 8">Fusaproliferin shows cytotoxicity against pancreatic cancer cell lines and provides a new chemical scaffold that can be further developed to obtain more potent synthetic agents against pancreatic cancer (PubMed:30545017). Fusaproliferin and its analogs show also anti-inflammatory activity and can be hit compounds for the treatment of inflammation-associated diseases (PubMed:37124719).</text>
</comment>
<comment type="similarity">
    <text evidence="10">In the N-terminal section; belongs to the terpene synthase family.</text>
</comment>
<comment type="similarity">
    <text evidence="10">In the C-terminal section; belongs to the FPP/GGPP synthase family.</text>
</comment>
<sequence>MGPLLYRSRHIPAEEAQETGCFTTLPIRIHLRDDLADAASRRFVSDWAREMGDGREKKTYFSFSPVGNWSSLIYPEAIPERLGVLAYLSDLGLIHDDTGEGLSIEEAQAEHDELHAALDPDDKSSLDPDSRAMKTKKLVSQCMLECINLDHELGLNMLAAFRDVWLAISEKNSDKEAQTLEEYLQYRSDNGGMLVFWPMLQFSLGISLSEAEHELVQPIIDAATEGLLLANDYFSWERELREVQSGQSKRIVSAVELFARTMGLSVEDAKEAVKSRIIKSESDFCQRRDDLYKAQPNISSKLRRWIDCAGLAVSGNHYWCSACPRQNAWKNDTLSNGQNGHGLYRIHDGNGFKTVPMTNKTATDLQSNDIKILSNGNGGNAILNGNGAKTVVNGNGAKRKLSQYRMASPEQEPFVQKKRSMDTDTSCQKHDIQTVSQYPHHKPSNLAMDAPAAYISGMPSKGVRAALIDALNTWLHVPSAAIKTITSVVNLLHNASLILDDLEDNSPLRRGLPSAHVIFGQAQSINSANFMFVRAVQEVAQSLSPAALTAVLEELEGLYLGQSWDLYWKFNLACPTEAEYVNMIDHKTGGMFRMLLRVMQAESTATETPGLDFERLILLFGRFFQIRDDYMNFGDYAAQKGLCEDLDEGKFSYPIVYCLANHPEYRGHILGVFRQRPTVATTTASPLSTESKAHLVSCLRKCGAFEKTLSCLRDVERELELEIDRLERLTGEANPMLRLCLAKLSTKGIATLG</sequence>
<organism>
    <name type="scientific">Fusarium proliferatum (strain ET1)</name>
    <name type="common">Orchid endophyte fungus</name>
    <dbReference type="NCBI Taxonomy" id="1227346"/>
    <lineage>
        <taxon>Eukaryota</taxon>
        <taxon>Fungi</taxon>
        <taxon>Dikarya</taxon>
        <taxon>Ascomycota</taxon>
        <taxon>Pezizomycotina</taxon>
        <taxon>Sordariomycetes</taxon>
        <taxon>Hypocreomycetidae</taxon>
        <taxon>Hypocreales</taxon>
        <taxon>Nectriaceae</taxon>
        <taxon>Fusarium</taxon>
        <taxon>Fusarium fujikuroi species complex</taxon>
    </lineage>
</organism>
<keyword id="KW-0414">Isoprene biosynthesis</keyword>
<keyword id="KW-0456">Lyase</keyword>
<keyword id="KW-0460">Magnesium</keyword>
<keyword id="KW-0479">Metal-binding</keyword>
<keyword id="KW-0511">Multifunctional enzyme</keyword>
<keyword id="KW-0677">Repeat</keyword>
<keyword id="KW-0808">Transferase</keyword>
<proteinExistence type="evidence at protein level"/>
<gene>
    <name evidence="9" type="primary">FUP1</name>
    <name type="ORF">FPRO_05646</name>
</gene>
<evidence type="ECO:0000250" key="1">
    <source>
        <dbReference type="UniProtKB" id="A2PZA5"/>
    </source>
</evidence>
<evidence type="ECO:0000250" key="2">
    <source>
        <dbReference type="UniProtKB" id="P9WEP0"/>
    </source>
</evidence>
<evidence type="ECO:0000250" key="3">
    <source>
        <dbReference type="UniProtKB" id="P9WEV7"/>
    </source>
</evidence>
<evidence type="ECO:0000250" key="4">
    <source>
        <dbReference type="UniProtKB" id="Q12051"/>
    </source>
</evidence>
<evidence type="ECO:0000250" key="5">
    <source>
        <dbReference type="UniProtKB" id="Q40577"/>
    </source>
</evidence>
<evidence type="ECO:0000269" key="6">
    <source>
    </source>
</evidence>
<evidence type="ECO:0000269" key="7">
    <source>
    </source>
</evidence>
<evidence type="ECO:0000269" key="8">
    <source>
    </source>
</evidence>
<evidence type="ECO:0000303" key="9">
    <source>
    </source>
</evidence>
<evidence type="ECO:0000305" key="10"/>
<name>FUP1_FUSPR</name>
<dbReference type="EC" id="4.2.3.-" evidence="7"/>
<dbReference type="EC" id="2.5.1.29" evidence="7"/>
<dbReference type="EMBL" id="FJOF01000003">
    <property type="protein sequence ID" value="CZR39162.1"/>
    <property type="molecule type" value="Genomic_DNA"/>
</dbReference>
<dbReference type="SMR" id="A0A1L7VFX3"/>
<dbReference type="VEuPathDB" id="FungiDB:FPRO_05646"/>
<dbReference type="UniPathway" id="UPA00213"/>
<dbReference type="Proteomes" id="UP000183971">
    <property type="component" value="Unassembled WGS sequence"/>
</dbReference>
<dbReference type="GO" id="GO:0004337">
    <property type="term" value="F:(2E,6E)-farnesyl diphosphate synthase activity"/>
    <property type="evidence" value="ECO:0007669"/>
    <property type="project" value="UniProtKB-EC"/>
</dbReference>
<dbReference type="GO" id="GO:0004161">
    <property type="term" value="F:dimethylallyltranstransferase activity"/>
    <property type="evidence" value="ECO:0007669"/>
    <property type="project" value="UniProtKB-EC"/>
</dbReference>
<dbReference type="GO" id="GO:0016829">
    <property type="term" value="F:lyase activity"/>
    <property type="evidence" value="ECO:0007669"/>
    <property type="project" value="UniProtKB-KW"/>
</dbReference>
<dbReference type="GO" id="GO:0046872">
    <property type="term" value="F:metal ion binding"/>
    <property type="evidence" value="ECO:0007669"/>
    <property type="project" value="UniProtKB-KW"/>
</dbReference>
<dbReference type="GO" id="GO:0046165">
    <property type="term" value="P:alcohol biosynthetic process"/>
    <property type="evidence" value="ECO:0007669"/>
    <property type="project" value="UniProtKB-ARBA"/>
</dbReference>
<dbReference type="GO" id="GO:0008299">
    <property type="term" value="P:isoprenoid biosynthetic process"/>
    <property type="evidence" value="ECO:0007669"/>
    <property type="project" value="UniProtKB-KW"/>
</dbReference>
<dbReference type="GO" id="GO:0043386">
    <property type="term" value="P:mycotoxin biosynthetic process"/>
    <property type="evidence" value="ECO:0007669"/>
    <property type="project" value="UniProtKB-ARBA"/>
</dbReference>
<dbReference type="CDD" id="cd00685">
    <property type="entry name" value="Trans_IPPS_HT"/>
    <property type="match status" value="1"/>
</dbReference>
<dbReference type="Gene3D" id="1.10.600.10">
    <property type="entry name" value="Farnesyl Diphosphate Synthase"/>
    <property type="match status" value="2"/>
</dbReference>
<dbReference type="InterPro" id="IPR008949">
    <property type="entry name" value="Isoprenoid_synthase_dom_sf"/>
</dbReference>
<dbReference type="InterPro" id="IPR000092">
    <property type="entry name" value="Polyprenyl_synt"/>
</dbReference>
<dbReference type="InterPro" id="IPR033749">
    <property type="entry name" value="Polyprenyl_synt_CS"/>
</dbReference>
<dbReference type="PANTHER" id="PTHR12001">
    <property type="entry name" value="GERANYLGERANYL PYROPHOSPHATE SYNTHASE"/>
    <property type="match status" value="1"/>
</dbReference>
<dbReference type="PANTHER" id="PTHR12001:SF72">
    <property type="entry name" value="THIJ_PFPI FAMILY PROTEIN (AFU_ORTHOLOGUE AFUA_3G01210)-RELATED"/>
    <property type="match status" value="1"/>
</dbReference>
<dbReference type="Pfam" id="PF00348">
    <property type="entry name" value="polyprenyl_synt"/>
    <property type="match status" value="1"/>
</dbReference>
<dbReference type="Pfam" id="PF19086">
    <property type="entry name" value="Terpene_syn_C_2"/>
    <property type="match status" value="1"/>
</dbReference>
<dbReference type="SFLD" id="SFLDS00005">
    <property type="entry name" value="Isoprenoid_Synthase_Type_I"/>
    <property type="match status" value="1"/>
</dbReference>
<dbReference type="SUPFAM" id="SSF48576">
    <property type="entry name" value="Terpenoid synthases"/>
    <property type="match status" value="2"/>
</dbReference>
<dbReference type="PROSITE" id="PS00723">
    <property type="entry name" value="POLYPRENYL_SYNTHASE_1"/>
    <property type="match status" value="1"/>
</dbReference>
<dbReference type="PROSITE" id="PS00444">
    <property type="entry name" value="POLYPRENYL_SYNTHASE_2"/>
    <property type="match status" value="1"/>
</dbReference>
<feature type="chain" id="PRO_0000460561" description="Bifunctional terpene synthase FUP1">
    <location>
        <begin position="1"/>
        <end position="753"/>
    </location>
</feature>
<feature type="region of interest" description="Terpene cyclase" evidence="2">
    <location>
        <begin position="1"/>
        <end position="329"/>
    </location>
</feature>
<feature type="region of interest" description="Prenyltransferase" evidence="2">
    <location>
        <begin position="330"/>
        <end position="745"/>
    </location>
</feature>
<feature type="short sequence motif" description="DDXXD 1" evidence="2">
    <location>
        <begin position="96"/>
        <end position="100"/>
    </location>
</feature>
<feature type="short sequence motif" description="NSE/DTE" evidence="2">
    <location>
        <begin position="231"/>
        <end position="239"/>
    </location>
</feature>
<feature type="short sequence motif" description="DDXXD 2" evidence="2">
    <location>
        <begin position="500"/>
        <end position="504"/>
    </location>
</feature>
<feature type="binding site" evidence="5">
    <location>
        <position position="96"/>
    </location>
    <ligand>
        <name>Mg(2+)</name>
        <dbReference type="ChEBI" id="CHEBI:18420"/>
        <label>1</label>
    </ligand>
</feature>
<feature type="binding site" evidence="5">
    <location>
        <position position="96"/>
    </location>
    <ligand>
        <name>Mg(2+)</name>
        <dbReference type="ChEBI" id="CHEBI:18420"/>
        <label>2</label>
    </ligand>
</feature>
<feature type="binding site" evidence="4">
    <location>
        <position position="461"/>
    </location>
    <ligand>
        <name>isopentenyl diphosphate</name>
        <dbReference type="ChEBI" id="CHEBI:128769"/>
    </ligand>
</feature>
<feature type="binding site" evidence="4">
    <location>
        <position position="464"/>
    </location>
    <ligand>
        <name>isopentenyl diphosphate</name>
        <dbReference type="ChEBI" id="CHEBI:128769"/>
    </ligand>
</feature>
<feature type="binding site" evidence="4">
    <location>
        <position position="493"/>
    </location>
    <ligand>
        <name>isopentenyl diphosphate</name>
        <dbReference type="ChEBI" id="CHEBI:128769"/>
    </ligand>
</feature>
<feature type="binding site" evidence="4">
    <location>
        <position position="500"/>
    </location>
    <ligand>
        <name>Mg(2+)</name>
        <dbReference type="ChEBI" id="CHEBI:18420"/>
        <label>3</label>
    </ligand>
</feature>
<feature type="binding site" evidence="4">
    <location>
        <position position="500"/>
    </location>
    <ligand>
        <name>Mg(2+)</name>
        <dbReference type="ChEBI" id="CHEBI:18420"/>
        <label>4</label>
    </ligand>
</feature>
<feature type="binding site" evidence="4">
    <location>
        <position position="504"/>
    </location>
    <ligand>
        <name>Mg(2+)</name>
        <dbReference type="ChEBI" id="CHEBI:18420"/>
        <label>3</label>
    </ligand>
</feature>
<feature type="binding site" evidence="4">
    <location>
        <position position="504"/>
    </location>
    <ligand>
        <name>Mg(2+)</name>
        <dbReference type="ChEBI" id="CHEBI:18420"/>
        <label>4</label>
    </ligand>
</feature>
<feature type="binding site" evidence="4">
    <location>
        <position position="509"/>
    </location>
    <ligand>
        <name>dimethylallyl diphosphate</name>
        <dbReference type="ChEBI" id="CHEBI:57623"/>
    </ligand>
</feature>
<feature type="binding site" evidence="4">
    <location>
        <position position="510"/>
    </location>
    <ligand>
        <name>isopentenyl diphosphate</name>
        <dbReference type="ChEBI" id="CHEBI:128769"/>
    </ligand>
</feature>
<feature type="binding site" evidence="4">
    <location>
        <position position="587"/>
    </location>
    <ligand>
        <name>dimethylallyl diphosphate</name>
        <dbReference type="ChEBI" id="CHEBI:57623"/>
    </ligand>
</feature>
<feature type="binding site" evidence="4">
    <location>
        <position position="588"/>
    </location>
    <ligand>
        <name>dimethylallyl diphosphate</name>
        <dbReference type="ChEBI" id="CHEBI:57623"/>
    </ligand>
</feature>
<feature type="binding site" evidence="4">
    <location>
        <position position="625"/>
    </location>
    <ligand>
        <name>dimethylallyl diphosphate</name>
        <dbReference type="ChEBI" id="CHEBI:57623"/>
    </ligand>
</feature>
<feature type="binding site" evidence="4">
    <location>
        <position position="632"/>
    </location>
    <ligand>
        <name>dimethylallyl diphosphate</name>
        <dbReference type="ChEBI" id="CHEBI:57623"/>
    </ligand>
</feature>
<feature type="binding site" evidence="4">
    <location>
        <position position="640"/>
    </location>
    <ligand>
        <name>dimethylallyl diphosphate</name>
        <dbReference type="ChEBI" id="CHEBI:57623"/>
    </ligand>
</feature>
<feature type="binding site" evidence="4">
    <location>
        <position position="650"/>
    </location>
    <ligand>
        <name>dimethylallyl diphosphate</name>
        <dbReference type="ChEBI" id="CHEBI:57623"/>
    </ligand>
</feature>